<reference key="1">
    <citation type="submission" date="1999-07" db="EMBL/GenBank/DDBJ databases">
        <title>Complete nucleotide sequence of RNA 1 of tobacco rattle virus isolate PpK20.</title>
        <authorList>
            <person name="Visser P.B."/>
            <person name="Bol J.F."/>
        </authorList>
    </citation>
    <scope>NUCLEOTIDE SEQUENCE [GENOMIC RNA]</scope>
</reference>
<organism>
    <name type="scientific">Tobacco rattle virus (isolate PpK20)</name>
    <name type="common">TRV</name>
    <dbReference type="NCBI Taxonomy" id="652939"/>
    <lineage>
        <taxon>Viruses</taxon>
        <taxon>Riboviria</taxon>
        <taxon>Orthornavirae</taxon>
        <taxon>Kitrinoviricota</taxon>
        <taxon>Alsuviricetes</taxon>
        <taxon>Martellivirales</taxon>
        <taxon>Virgaviridae</taxon>
        <taxon>Tobravirus</taxon>
        <taxon>Tobacco rattle virus</taxon>
    </lineage>
</organism>
<comment type="function">
    <molecule>Replicase large subunit</molecule>
    <text evidence="1">Is an RNA-dependent RNA polymerase active in viral RNA replication.</text>
</comment>
<comment type="function">
    <molecule>Replicase small subunit</molecule>
    <text evidence="5">Is a methyltransferase active in RNA capping and an RNA helicase. Methyltransferase displays a cytoplasmic capping enzyme activity. This function is necessary since all viral RNAs are synthesized in the cytoplasm, and host capping enzymes are restricted to the nucleus. Helicase region probably exhibits NTPase and RNA unwinding activities (Potential).</text>
</comment>
<comment type="catalytic activity">
    <reaction>
        <text>ATP + H2O = ADP + phosphate + H(+)</text>
        <dbReference type="Rhea" id="RHEA:13065"/>
        <dbReference type="ChEBI" id="CHEBI:15377"/>
        <dbReference type="ChEBI" id="CHEBI:15378"/>
        <dbReference type="ChEBI" id="CHEBI:30616"/>
        <dbReference type="ChEBI" id="CHEBI:43474"/>
        <dbReference type="ChEBI" id="CHEBI:456216"/>
        <dbReference type="EC" id="3.6.4.13"/>
    </reaction>
</comment>
<comment type="catalytic activity">
    <reaction evidence="3">
        <text>RNA(n) + a ribonucleoside 5'-triphosphate = RNA(n+1) + diphosphate</text>
        <dbReference type="Rhea" id="RHEA:21248"/>
        <dbReference type="Rhea" id="RHEA-COMP:14527"/>
        <dbReference type="Rhea" id="RHEA-COMP:17342"/>
        <dbReference type="ChEBI" id="CHEBI:33019"/>
        <dbReference type="ChEBI" id="CHEBI:61557"/>
        <dbReference type="ChEBI" id="CHEBI:140395"/>
        <dbReference type="EC" id="2.7.7.48"/>
    </reaction>
</comment>
<comment type="subunit">
    <text evidence="1">Heterodimer of a large and a small subunit.</text>
</comment>
<comment type="miscellaneous">
    <text>The replicase large subunit is translated as a fusion protein by episodic readthrough of a termination codon. When readthrough of the terminator codon TGA occurs between the codons for 1187-Lys and 1189-Arg, this results in the addition of the RdRp region.</text>
</comment>
<comment type="similarity">
    <text evidence="5">Belongs to the ssRNA positive-strand viruses RNA-directed RNA polymerase family.</text>
</comment>
<sequence length="1707" mass="194180">MANGNFKLSQLLNVDEMSAEQRSHFFDLMLTKPDCEIGQMMQRVVVDKVDDMIRERKTKDPVIVHEVLSQKEQNKLMEIYPEFNIVFKDDKNMVHGFAAAERKLQALLLLDRVPALQEVDDIGGQWSFWVTRGEKRIHSCCPNLDIRDDQREISRQIFLTAIGDQARSGKRQMSENELWMYDQFRKNIAAPNAVRCNNTYHGCTCRGFSDGKKKGAQYAIALHSLYDFKLKDLMATMVEKKTKVGHAAMLFAPESMLVDEGPLPSVDGYYMKKNGKIYFGFEKDPSFSYIHDWEEYKKYLLGKPVSYQGNVFYFEPWQVRGDTMLFSIYRIAGVPRRSLSSQEYYRRIYISRWENMVVVPIFDLVESTRELVKKDLFVEKQFMDKCLDYIARLSDQQLTISNVKSYLSSNNWVLFINGAAVKNKQSVDSRDLQLLAQTLLVKEQVARPVMRELREAILTETKPITSLTDVLGLISRKMWKQFANKIAVGGFVGMVGTLIGFYPKKVLTWAKDTPNGPELCYENSHKTKVIVFLSVVYAIGGITLMRRDIRDGLVKKLCDMFDIKRGAHVLDVENPCRYYDINDFFSSLYSASESGETVLPDLSEVKAKSDKLLQQKKEIADEFLSAKFSNYSGSSVRTSPPSVVGSSRSGLGLLLEDSNVLTQARVGVSRKVADEEIMEQFLSGLIDTEAEIDEVVPAFSAECERGETSGTKVLCNLLTPPGFENVLPAVKPLVSKGKTVKRVDYFQVMGGERLPKRPVVSGDDSVDARREFLYYLDAERVAQNDEIMSLYRDYSRGVIRTGGQNYPHGLGVWDVEMKNWCIRPVVTEHAYVSNPDKRMDDWSGYLEVAVWERGMLVNDFAVERMSDYVIVCDQTYLCNNRLILDNLSALDLGPVNCSFELVDGVPGCGKSTMIVNSANPCVDVVLSTGRAATDDLIERFASKGFPCKLKRRVKTVDSFLMHCVDGSLTGDVLHFDEALMAHAGMVYFCAQIAGAKRCICQGDQNQISFKPRVSQVDLRFSSLVGKFDIVTEKRETYRSPADVAAVLNKYYTGDVRTHNATANSMTVRKIVSKEQVSLKPGAQYITFLQSEKKELVNLLALRKVAAKVSTVHESQGETFKDVVLVRTKPTDDSIARGREYLIVALSRHTQSLVYETVKEDDVSKEIRESAALTKAALARFFVTETVLXRFRSRFDVFRHHEGPCAVPDSGTITDLEMWYDALFPGNSLRDSSLDGYLVATTDCNLRLDNVTIKSGNWKDKFAEKETFLKPVIRTAMPDKRKTTQLESLLALQKRNQAAPDLQENVHATVLIEETMKKLKSVVYDVGKIRADPIVNRAQMERWWRNQSTAVQAKVVADVRELHEIDYSSYMFMIKSDVKPKTDLTPQFEYSALQTVVYHEKLINSLFGPIFKEINERKLDAMQPHFVFNTRMTSSDLNDRVKFLNTEAAYDFVEIDMSKFDKSANRFHLQLQLEIYRLFGLDEWAAFLWEVSHTQTTVRDIQNGMMAHIWYQQKSGDADTYNANSDRTLCALLSELPLEKAVMVTYGGDDSLIAFPRGTQFVDPCPKLATKWNFECKIFKYDVPMFCGKFLLKTSSCYEFVPDPVKVLTKLGKKSIKDVQHLAEIYISLNDSNRALGNYMVVSKLSESVSDRYLYKGDSVHALCALWKHIKSFTALCTLFRDENDKELNPAKVDWKKAQRAVSNFYDW</sequence>
<dbReference type="EC" id="2.1.1.-"/>
<dbReference type="EC" id="2.7.7.-"/>
<dbReference type="EC" id="2.7.7.48"/>
<dbReference type="EC" id="3.6.4.13"/>
<dbReference type="EMBL" id="AF166084">
    <property type="protein sequence ID" value="AAD48026.1"/>
    <property type="molecule type" value="Genomic_RNA"/>
</dbReference>
<dbReference type="EMBL" id="AF166084">
    <property type="protein sequence ID" value="AAD48027.2"/>
    <property type="molecule type" value="Genomic_RNA"/>
</dbReference>
<dbReference type="RefSeq" id="NP_620669.1">
    <property type="nucleotide sequence ID" value="NC_003805.1"/>
</dbReference>
<dbReference type="GeneID" id="962130"/>
<dbReference type="KEGG" id="vg:962129"/>
<dbReference type="KEGG" id="vg:962130"/>
<dbReference type="Proteomes" id="UP000001669">
    <property type="component" value="Genome"/>
</dbReference>
<dbReference type="GO" id="GO:0005524">
    <property type="term" value="F:ATP binding"/>
    <property type="evidence" value="ECO:0007669"/>
    <property type="project" value="UniProtKB-KW"/>
</dbReference>
<dbReference type="GO" id="GO:0016887">
    <property type="term" value="F:ATP hydrolysis activity"/>
    <property type="evidence" value="ECO:0007669"/>
    <property type="project" value="RHEA"/>
</dbReference>
<dbReference type="GO" id="GO:0008174">
    <property type="term" value="F:mRNA methyltransferase activity"/>
    <property type="evidence" value="ECO:0007669"/>
    <property type="project" value="InterPro"/>
</dbReference>
<dbReference type="GO" id="GO:0003723">
    <property type="term" value="F:RNA binding"/>
    <property type="evidence" value="ECO:0007669"/>
    <property type="project" value="UniProtKB-KW"/>
</dbReference>
<dbReference type="GO" id="GO:0003724">
    <property type="term" value="F:RNA helicase activity"/>
    <property type="evidence" value="ECO:0007669"/>
    <property type="project" value="UniProtKB-EC"/>
</dbReference>
<dbReference type="GO" id="GO:0003968">
    <property type="term" value="F:RNA-directed RNA polymerase activity"/>
    <property type="evidence" value="ECO:0007669"/>
    <property type="project" value="UniProtKB-KW"/>
</dbReference>
<dbReference type="GO" id="GO:0006351">
    <property type="term" value="P:DNA-templated transcription"/>
    <property type="evidence" value="ECO:0007669"/>
    <property type="project" value="InterPro"/>
</dbReference>
<dbReference type="GO" id="GO:0032259">
    <property type="term" value="P:methylation"/>
    <property type="evidence" value="ECO:0007669"/>
    <property type="project" value="UniProtKB-KW"/>
</dbReference>
<dbReference type="GO" id="GO:0016556">
    <property type="term" value="P:mRNA modification"/>
    <property type="evidence" value="ECO:0007669"/>
    <property type="project" value="InterPro"/>
</dbReference>
<dbReference type="GO" id="GO:0006396">
    <property type="term" value="P:RNA processing"/>
    <property type="evidence" value="ECO:0007669"/>
    <property type="project" value="InterPro"/>
</dbReference>
<dbReference type="GO" id="GO:0039694">
    <property type="term" value="P:viral RNA genome replication"/>
    <property type="evidence" value="ECO:0007669"/>
    <property type="project" value="InterPro"/>
</dbReference>
<dbReference type="CDD" id="cd23251">
    <property type="entry name" value="Virgaviridae_RdRp"/>
    <property type="match status" value="1"/>
</dbReference>
<dbReference type="Gene3D" id="3.40.50.300">
    <property type="entry name" value="P-loop containing nucleotide triphosphate hydrolases"/>
    <property type="match status" value="2"/>
</dbReference>
<dbReference type="InterPro" id="IPR027351">
    <property type="entry name" value="(+)RNA_virus_helicase_core_dom"/>
</dbReference>
<dbReference type="InterPro" id="IPR002588">
    <property type="entry name" value="Alphavirus-like_MT_dom"/>
</dbReference>
<dbReference type="InterPro" id="IPR043502">
    <property type="entry name" value="DNA/RNA_pol_sf"/>
</dbReference>
<dbReference type="InterPro" id="IPR027417">
    <property type="entry name" value="P-loop_NTPase"/>
</dbReference>
<dbReference type="InterPro" id="IPR001788">
    <property type="entry name" value="RNA-dep_RNA_pol_alsuvir"/>
</dbReference>
<dbReference type="InterPro" id="IPR007094">
    <property type="entry name" value="RNA-dir_pol_PSvirus"/>
</dbReference>
<dbReference type="InterPro" id="IPR047310">
    <property type="entry name" value="Virgaviridae_RdRp"/>
</dbReference>
<dbReference type="Pfam" id="PF00978">
    <property type="entry name" value="RdRP_2"/>
    <property type="match status" value="1"/>
</dbReference>
<dbReference type="Pfam" id="PF01443">
    <property type="entry name" value="Viral_helicase1"/>
    <property type="match status" value="1"/>
</dbReference>
<dbReference type="Pfam" id="PF01660">
    <property type="entry name" value="Vmethyltransf"/>
    <property type="match status" value="1"/>
</dbReference>
<dbReference type="SUPFAM" id="SSF56672">
    <property type="entry name" value="DNA/RNA polymerases"/>
    <property type="match status" value="1"/>
</dbReference>
<dbReference type="SUPFAM" id="SSF52540">
    <property type="entry name" value="P-loop containing nucleoside triphosphate hydrolases"/>
    <property type="match status" value="1"/>
</dbReference>
<dbReference type="PROSITE" id="PS51743">
    <property type="entry name" value="ALPHAVIRUS_MT"/>
    <property type="match status" value="1"/>
</dbReference>
<dbReference type="PROSITE" id="PS51657">
    <property type="entry name" value="PSRV_HELICASE"/>
    <property type="match status" value="1"/>
</dbReference>
<dbReference type="PROSITE" id="PS50507">
    <property type="entry name" value="RDRP_SSRNA_POS"/>
    <property type="match status" value="1"/>
</dbReference>
<feature type="chain" id="PRO_0000409292" description="Replicase large subunit">
    <location>
        <begin position="1"/>
        <end position="1707"/>
    </location>
</feature>
<feature type="chain" id="PRO_0000409293" description="Replicase small subunit">
    <location>
        <begin position="1"/>
        <end position="1187"/>
    </location>
</feature>
<feature type="domain" description="Alphavirus-like MT" evidence="4">
    <location>
        <begin position="86"/>
        <end position="300"/>
    </location>
</feature>
<feature type="domain" description="(+)RNA virus helicase ATP-binding">
    <location>
        <begin position="872"/>
        <end position="1033"/>
    </location>
</feature>
<feature type="domain" description="(+)RNA virus helicase C-terminal">
    <location>
        <begin position="1034"/>
        <end position="1187"/>
    </location>
</feature>
<feature type="domain" description="RdRp catalytic" evidence="3">
    <location>
        <begin position="1449"/>
        <end position="1562"/>
    </location>
</feature>
<feature type="region of interest" description="Methyltransferase">
    <location>
        <begin position="65"/>
        <end position="425"/>
    </location>
</feature>
<feature type="region of interest" description="Helicase">
    <location>
        <begin position="901"/>
        <end position="1155"/>
    </location>
</feature>
<feature type="coiled-coil region" evidence="2">
    <location>
        <begin position="601"/>
        <end position="622"/>
    </location>
</feature>
<proteinExistence type="inferred from homology"/>
<name>RDRP_TRVPP</name>
<accession>Q9J942</accession>
<accession>Q9QPN5</accession>
<organismHost>
    <name type="scientific">Bidens pilosa</name>
    <name type="common">Hairy beggarticks</name>
    <name type="synonym">Cobbler's pegs</name>
    <dbReference type="NCBI Taxonomy" id="42337"/>
</organismHost>
<organismHost>
    <name type="scientific">Capsicum annuum</name>
    <name type="common">Capsicum pepper</name>
    <dbReference type="NCBI Taxonomy" id="4072"/>
</organismHost>
<organismHost>
    <name type="scientific">Cynara cardunculus var. scolymus</name>
    <name type="common">Globe artichoke</name>
    <name type="synonym">Cynara scolymus</name>
    <dbReference type="NCBI Taxonomy" id="59895"/>
</organismHost>
<organismHost>
    <name type="scientific">Solanum lycopersicum</name>
    <name type="common">Tomato</name>
    <name type="synonym">Lycopersicon esculentum</name>
    <dbReference type="NCBI Taxonomy" id="4081"/>
</organismHost>
<keyword id="KW-0067">ATP-binding</keyword>
<keyword id="KW-0175">Coiled coil</keyword>
<keyword id="KW-0347">Helicase</keyword>
<keyword id="KW-0378">Hydrolase</keyword>
<keyword id="KW-0489">Methyltransferase</keyword>
<keyword id="KW-0547">Nucleotide-binding</keyword>
<keyword id="KW-0548">Nucleotidyltransferase</keyword>
<keyword id="KW-1185">Reference proteome</keyword>
<keyword id="KW-0694">RNA-binding</keyword>
<keyword id="KW-0696">RNA-directed RNA polymerase</keyword>
<keyword id="KW-0808">Transferase</keyword>
<keyword id="KW-0693">Viral RNA replication</keyword>
<protein>
    <recommendedName>
        <fullName>Replicase large subunit</fullName>
        <ecNumber>2.1.1.-</ecNumber>
        <ecNumber>2.7.7.-</ecNumber>
        <ecNumber>2.7.7.48</ecNumber>
        <ecNumber>3.6.4.13</ecNumber>
    </recommendedName>
    <alternativeName>
        <fullName>194 kDa protein</fullName>
    </alternativeName>
    <alternativeName>
        <fullName>RNA-directed RNA polymerase</fullName>
    </alternativeName>
    <component>
        <recommendedName>
            <fullName>Replicase small subunit</fullName>
            <ecNumber>2.1.1.-</ecNumber>
            <ecNumber>2.7.7.-</ecNumber>
            <ecNumber>3.6.4.13</ecNumber>
        </recommendedName>
        <alternativeName>
            <fullName>134 kDa protein</fullName>
        </alternativeName>
        <alternativeName>
            <fullName>Methyltransferase/RNA helicase</fullName>
        </alternativeName>
    </component>
</protein>
<evidence type="ECO:0000250" key="1"/>
<evidence type="ECO:0000255" key="2"/>
<evidence type="ECO:0000255" key="3">
    <source>
        <dbReference type="PROSITE-ProRule" id="PRU00539"/>
    </source>
</evidence>
<evidence type="ECO:0000255" key="4">
    <source>
        <dbReference type="PROSITE-ProRule" id="PRU01079"/>
    </source>
</evidence>
<evidence type="ECO:0000305" key="5"/>